<reference key="1">
    <citation type="journal article" date="2005" name="Science">
        <title>The transcriptional landscape of the mammalian genome.</title>
        <authorList>
            <person name="Carninci P."/>
            <person name="Kasukawa T."/>
            <person name="Katayama S."/>
            <person name="Gough J."/>
            <person name="Frith M.C."/>
            <person name="Maeda N."/>
            <person name="Oyama R."/>
            <person name="Ravasi T."/>
            <person name="Lenhard B."/>
            <person name="Wells C."/>
            <person name="Kodzius R."/>
            <person name="Shimokawa K."/>
            <person name="Bajic V.B."/>
            <person name="Brenner S.E."/>
            <person name="Batalov S."/>
            <person name="Forrest A.R."/>
            <person name="Zavolan M."/>
            <person name="Davis M.J."/>
            <person name="Wilming L.G."/>
            <person name="Aidinis V."/>
            <person name="Allen J.E."/>
            <person name="Ambesi-Impiombato A."/>
            <person name="Apweiler R."/>
            <person name="Aturaliya R.N."/>
            <person name="Bailey T.L."/>
            <person name="Bansal M."/>
            <person name="Baxter L."/>
            <person name="Beisel K.W."/>
            <person name="Bersano T."/>
            <person name="Bono H."/>
            <person name="Chalk A.M."/>
            <person name="Chiu K.P."/>
            <person name="Choudhary V."/>
            <person name="Christoffels A."/>
            <person name="Clutterbuck D.R."/>
            <person name="Crowe M.L."/>
            <person name="Dalla E."/>
            <person name="Dalrymple B.P."/>
            <person name="de Bono B."/>
            <person name="Della Gatta G."/>
            <person name="di Bernardo D."/>
            <person name="Down T."/>
            <person name="Engstrom P."/>
            <person name="Fagiolini M."/>
            <person name="Faulkner G."/>
            <person name="Fletcher C.F."/>
            <person name="Fukushima T."/>
            <person name="Furuno M."/>
            <person name="Futaki S."/>
            <person name="Gariboldi M."/>
            <person name="Georgii-Hemming P."/>
            <person name="Gingeras T.R."/>
            <person name="Gojobori T."/>
            <person name="Green R.E."/>
            <person name="Gustincich S."/>
            <person name="Harbers M."/>
            <person name="Hayashi Y."/>
            <person name="Hensch T.K."/>
            <person name="Hirokawa N."/>
            <person name="Hill D."/>
            <person name="Huminiecki L."/>
            <person name="Iacono M."/>
            <person name="Ikeo K."/>
            <person name="Iwama A."/>
            <person name="Ishikawa T."/>
            <person name="Jakt M."/>
            <person name="Kanapin A."/>
            <person name="Katoh M."/>
            <person name="Kawasawa Y."/>
            <person name="Kelso J."/>
            <person name="Kitamura H."/>
            <person name="Kitano H."/>
            <person name="Kollias G."/>
            <person name="Krishnan S.P."/>
            <person name="Kruger A."/>
            <person name="Kummerfeld S.K."/>
            <person name="Kurochkin I.V."/>
            <person name="Lareau L.F."/>
            <person name="Lazarevic D."/>
            <person name="Lipovich L."/>
            <person name="Liu J."/>
            <person name="Liuni S."/>
            <person name="McWilliam S."/>
            <person name="Madan Babu M."/>
            <person name="Madera M."/>
            <person name="Marchionni L."/>
            <person name="Matsuda H."/>
            <person name="Matsuzawa S."/>
            <person name="Miki H."/>
            <person name="Mignone F."/>
            <person name="Miyake S."/>
            <person name="Morris K."/>
            <person name="Mottagui-Tabar S."/>
            <person name="Mulder N."/>
            <person name="Nakano N."/>
            <person name="Nakauchi H."/>
            <person name="Ng P."/>
            <person name="Nilsson R."/>
            <person name="Nishiguchi S."/>
            <person name="Nishikawa S."/>
            <person name="Nori F."/>
            <person name="Ohara O."/>
            <person name="Okazaki Y."/>
            <person name="Orlando V."/>
            <person name="Pang K.C."/>
            <person name="Pavan W.J."/>
            <person name="Pavesi G."/>
            <person name="Pesole G."/>
            <person name="Petrovsky N."/>
            <person name="Piazza S."/>
            <person name="Reed J."/>
            <person name="Reid J.F."/>
            <person name="Ring B.Z."/>
            <person name="Ringwald M."/>
            <person name="Rost B."/>
            <person name="Ruan Y."/>
            <person name="Salzberg S.L."/>
            <person name="Sandelin A."/>
            <person name="Schneider C."/>
            <person name="Schoenbach C."/>
            <person name="Sekiguchi K."/>
            <person name="Semple C.A."/>
            <person name="Seno S."/>
            <person name="Sessa L."/>
            <person name="Sheng Y."/>
            <person name="Shibata Y."/>
            <person name="Shimada H."/>
            <person name="Shimada K."/>
            <person name="Silva D."/>
            <person name="Sinclair B."/>
            <person name="Sperling S."/>
            <person name="Stupka E."/>
            <person name="Sugiura K."/>
            <person name="Sultana R."/>
            <person name="Takenaka Y."/>
            <person name="Taki K."/>
            <person name="Tammoja K."/>
            <person name="Tan S.L."/>
            <person name="Tang S."/>
            <person name="Taylor M.S."/>
            <person name="Tegner J."/>
            <person name="Teichmann S.A."/>
            <person name="Ueda H.R."/>
            <person name="van Nimwegen E."/>
            <person name="Verardo R."/>
            <person name="Wei C.L."/>
            <person name="Yagi K."/>
            <person name="Yamanishi H."/>
            <person name="Zabarovsky E."/>
            <person name="Zhu S."/>
            <person name="Zimmer A."/>
            <person name="Hide W."/>
            <person name="Bult C."/>
            <person name="Grimmond S.M."/>
            <person name="Teasdale R.D."/>
            <person name="Liu E.T."/>
            <person name="Brusic V."/>
            <person name="Quackenbush J."/>
            <person name="Wahlestedt C."/>
            <person name="Mattick J.S."/>
            <person name="Hume D.A."/>
            <person name="Kai C."/>
            <person name="Sasaki D."/>
            <person name="Tomaru Y."/>
            <person name="Fukuda S."/>
            <person name="Kanamori-Katayama M."/>
            <person name="Suzuki M."/>
            <person name="Aoki J."/>
            <person name="Arakawa T."/>
            <person name="Iida J."/>
            <person name="Imamura K."/>
            <person name="Itoh M."/>
            <person name="Kato T."/>
            <person name="Kawaji H."/>
            <person name="Kawagashira N."/>
            <person name="Kawashima T."/>
            <person name="Kojima M."/>
            <person name="Kondo S."/>
            <person name="Konno H."/>
            <person name="Nakano K."/>
            <person name="Ninomiya N."/>
            <person name="Nishio T."/>
            <person name="Okada M."/>
            <person name="Plessy C."/>
            <person name="Shibata K."/>
            <person name="Shiraki T."/>
            <person name="Suzuki S."/>
            <person name="Tagami M."/>
            <person name="Waki K."/>
            <person name="Watahiki A."/>
            <person name="Okamura-Oho Y."/>
            <person name="Suzuki H."/>
            <person name="Kawai J."/>
            <person name="Hayashizaki Y."/>
        </authorList>
    </citation>
    <scope>NUCLEOTIDE SEQUENCE [LARGE SCALE MRNA]</scope>
    <source>
        <strain>C57BL/6J</strain>
        <tissue>Kidney</tissue>
        <tissue>Tongue</tissue>
    </source>
</reference>
<reference key="2">
    <citation type="journal article" date="2004" name="Genome Res.">
        <title>The status, quality, and expansion of the NIH full-length cDNA project: the Mammalian Gene Collection (MGC).</title>
        <authorList>
            <consortium name="The MGC Project Team"/>
        </authorList>
    </citation>
    <scope>NUCLEOTIDE SEQUENCE [LARGE SCALE MRNA]</scope>
    <source>
        <strain>FVB/N</strain>
        <tissue>Mammary tumor</tissue>
    </source>
</reference>
<reference key="3">
    <citation type="journal article" date="2007" name="Proc. Natl. Acad. Sci. U.S.A.">
        <title>Large-scale phosphorylation analysis of mouse liver.</title>
        <authorList>
            <person name="Villen J."/>
            <person name="Beausoleil S.A."/>
            <person name="Gerber S.A."/>
            <person name="Gygi S.P."/>
        </authorList>
    </citation>
    <scope>PHOSPHORYLATION [LARGE SCALE ANALYSIS] AT SER-120 AND SER-122</scope>
    <scope>IDENTIFICATION BY MASS SPECTROMETRY [LARGE SCALE ANALYSIS]</scope>
    <source>
        <tissue>Liver</tissue>
    </source>
</reference>
<reference key="4">
    <citation type="journal article" date="2010" name="Cell">
        <title>A tissue-specific atlas of mouse protein phosphorylation and expression.</title>
        <authorList>
            <person name="Huttlin E.L."/>
            <person name="Jedrychowski M.P."/>
            <person name="Elias J.E."/>
            <person name="Goswami T."/>
            <person name="Rad R."/>
            <person name="Beausoleil S.A."/>
            <person name="Villen J."/>
            <person name="Haas W."/>
            <person name="Sowa M.E."/>
            <person name="Gygi S.P."/>
        </authorList>
    </citation>
    <scope>PHOSPHORYLATION [LARGE SCALE ANALYSIS] AT SER-117; SER-120 AND SER-122</scope>
    <scope>IDENTIFICATION BY MASS SPECTROMETRY [LARGE SCALE ANALYSIS]</scope>
    <source>
        <tissue>Brain</tissue>
        <tissue>Brown adipose tissue</tissue>
        <tissue>Heart</tissue>
        <tissue>Liver</tissue>
        <tissue>Lung</tissue>
        <tissue>Pancreas</tissue>
        <tissue>Spleen</tissue>
        <tissue>Testis</tissue>
    </source>
</reference>
<organism>
    <name type="scientific">Mus musculus</name>
    <name type="common">Mouse</name>
    <dbReference type="NCBI Taxonomy" id="10090"/>
    <lineage>
        <taxon>Eukaryota</taxon>
        <taxon>Metazoa</taxon>
        <taxon>Chordata</taxon>
        <taxon>Craniata</taxon>
        <taxon>Vertebrata</taxon>
        <taxon>Euteleostomi</taxon>
        <taxon>Mammalia</taxon>
        <taxon>Eutheria</taxon>
        <taxon>Euarchontoglires</taxon>
        <taxon>Glires</taxon>
        <taxon>Rodentia</taxon>
        <taxon>Myomorpha</taxon>
        <taxon>Muroidea</taxon>
        <taxon>Muridae</taxon>
        <taxon>Murinae</taxon>
        <taxon>Mus</taxon>
        <taxon>Mus</taxon>
    </lineage>
</organism>
<name>RPAP3_MOUSE</name>
<keyword id="KW-0007">Acetylation</keyword>
<keyword id="KW-1017">Isopeptide bond</keyword>
<keyword id="KW-0597">Phosphoprotein</keyword>
<keyword id="KW-1185">Reference proteome</keyword>
<keyword id="KW-0677">Repeat</keyword>
<keyword id="KW-0802">TPR repeat</keyword>
<keyword id="KW-0832">Ubl conjugation</keyword>
<feature type="initiator methionine" description="Removed" evidence="1">
    <location>
        <position position="1"/>
    </location>
</feature>
<feature type="chain" id="PRO_0000302795" description="RNA polymerase II-associated protein 3">
    <location>
        <begin position="2"/>
        <end position="660"/>
    </location>
</feature>
<feature type="repeat" description="TPR 1">
    <location>
        <begin position="8"/>
        <end position="41"/>
    </location>
</feature>
<feature type="repeat" description="TPR 2">
    <location>
        <begin position="134"/>
        <end position="167"/>
    </location>
</feature>
<feature type="repeat" description="TPR 3">
    <location>
        <begin position="169"/>
        <end position="201"/>
    </location>
</feature>
<feature type="repeat" description="TPR 4">
    <location>
        <begin position="202"/>
        <end position="235"/>
    </location>
</feature>
<feature type="repeat" description="TPR 5">
    <location>
        <begin position="284"/>
        <end position="317"/>
    </location>
</feature>
<feature type="repeat" description="TPR 6">
    <location>
        <begin position="319"/>
        <end position="351"/>
    </location>
</feature>
<feature type="repeat" description="TPR 7">
    <location>
        <begin position="352"/>
        <end position="385"/>
    </location>
</feature>
<feature type="region of interest" description="Disordered" evidence="2">
    <location>
        <begin position="42"/>
        <end position="83"/>
    </location>
</feature>
<feature type="region of interest" description="Disordered" evidence="2">
    <location>
        <begin position="109"/>
        <end position="128"/>
    </location>
</feature>
<feature type="region of interest" description="Disordered" evidence="2">
    <location>
        <begin position="250"/>
        <end position="283"/>
    </location>
</feature>
<feature type="region of interest" description="Disordered" evidence="2">
    <location>
        <begin position="449"/>
        <end position="485"/>
    </location>
</feature>
<feature type="compositionally biased region" description="Basic residues" evidence="2">
    <location>
        <begin position="60"/>
        <end position="69"/>
    </location>
</feature>
<feature type="compositionally biased region" description="Basic and acidic residues" evidence="2">
    <location>
        <begin position="70"/>
        <end position="83"/>
    </location>
</feature>
<feature type="compositionally biased region" description="Low complexity" evidence="2">
    <location>
        <begin position="252"/>
        <end position="273"/>
    </location>
</feature>
<feature type="modified residue" description="N-acetylthreonine" evidence="1">
    <location>
        <position position="2"/>
    </location>
</feature>
<feature type="modified residue" description="Phosphoserine" evidence="1">
    <location>
        <position position="88"/>
    </location>
</feature>
<feature type="modified residue" description="Phosphoserine" evidence="5">
    <location>
        <position position="117"/>
    </location>
</feature>
<feature type="modified residue" description="Phosphoserine" evidence="4 5">
    <location>
        <position position="120"/>
    </location>
</feature>
<feature type="modified residue" description="Phosphoserine" evidence="4 5">
    <location>
        <position position="122"/>
    </location>
</feature>
<feature type="modified residue" description="Phosphoserine" evidence="1">
    <location>
        <position position="476"/>
    </location>
</feature>
<feature type="cross-link" description="Glycyl lysine isopeptide (Lys-Gly) (interchain with G-Cter in SUMO2)" evidence="1">
    <location>
        <position position="493"/>
    </location>
</feature>
<evidence type="ECO:0000250" key="1">
    <source>
        <dbReference type="UniProtKB" id="Q9H6T3"/>
    </source>
</evidence>
<evidence type="ECO:0000256" key="2">
    <source>
        <dbReference type="SAM" id="MobiDB-lite"/>
    </source>
</evidence>
<evidence type="ECO:0000305" key="3"/>
<evidence type="ECO:0007744" key="4">
    <source>
    </source>
</evidence>
<evidence type="ECO:0007744" key="5">
    <source>
    </source>
</evidence>
<accession>Q9D706</accession>
<proteinExistence type="evidence at protein level"/>
<dbReference type="EMBL" id="AK009765">
    <property type="protein sequence ID" value="BAB26489.1"/>
    <property type="molecule type" value="mRNA"/>
</dbReference>
<dbReference type="EMBL" id="AK169097">
    <property type="protein sequence ID" value="BAE40880.1"/>
    <property type="molecule type" value="mRNA"/>
</dbReference>
<dbReference type="EMBL" id="BC004046">
    <property type="protein sequence ID" value="AAH04046.1"/>
    <property type="molecule type" value="mRNA"/>
</dbReference>
<dbReference type="CCDS" id="CCDS27782.1"/>
<dbReference type="RefSeq" id="NP_082279.1">
    <property type="nucleotide sequence ID" value="NM_028003.2"/>
</dbReference>
<dbReference type="SMR" id="Q9D706"/>
<dbReference type="BioGRID" id="215031">
    <property type="interactions" value="22"/>
</dbReference>
<dbReference type="FunCoup" id="Q9D706">
    <property type="interactions" value="1555"/>
</dbReference>
<dbReference type="IntAct" id="Q9D706">
    <property type="interactions" value="3"/>
</dbReference>
<dbReference type="MINT" id="Q9D706"/>
<dbReference type="STRING" id="10090.ENSMUSP00000023104"/>
<dbReference type="iPTMnet" id="Q9D706"/>
<dbReference type="PhosphoSitePlus" id="Q9D706"/>
<dbReference type="SwissPalm" id="Q9D706"/>
<dbReference type="jPOST" id="Q9D706"/>
<dbReference type="PaxDb" id="10090-ENSMUSP00000023104"/>
<dbReference type="PeptideAtlas" id="Q9D706"/>
<dbReference type="ProteomicsDB" id="300475"/>
<dbReference type="Pumba" id="Q9D706"/>
<dbReference type="Antibodypedia" id="25352">
    <property type="antibodies" value="161 antibodies from 29 providers"/>
</dbReference>
<dbReference type="Ensembl" id="ENSMUST00000023104.7">
    <property type="protein sequence ID" value="ENSMUSP00000023104.6"/>
    <property type="gene ID" value="ENSMUSG00000022466.7"/>
</dbReference>
<dbReference type="GeneID" id="71919"/>
<dbReference type="KEGG" id="mmu:71919"/>
<dbReference type="UCSC" id="uc007xkv.1">
    <property type="organism name" value="mouse"/>
</dbReference>
<dbReference type="AGR" id="MGI:1277218"/>
<dbReference type="CTD" id="79657"/>
<dbReference type="MGI" id="MGI:1277218">
    <property type="gene designation" value="Rpap3"/>
</dbReference>
<dbReference type="VEuPathDB" id="HostDB:ENSMUSG00000022466"/>
<dbReference type="eggNOG" id="KOG4648">
    <property type="taxonomic scope" value="Eukaryota"/>
</dbReference>
<dbReference type="GeneTree" id="ENSGT00940000156749"/>
<dbReference type="HOGENOM" id="CLU_023272_1_0_1"/>
<dbReference type="InParanoid" id="Q9D706"/>
<dbReference type="OMA" id="NFTPDRP"/>
<dbReference type="OrthoDB" id="629492at2759"/>
<dbReference type="PhylomeDB" id="Q9D706"/>
<dbReference type="TreeFam" id="TF106243"/>
<dbReference type="BioGRID-ORCS" id="71919">
    <property type="hits" value="11 hits in 77 CRISPR screens"/>
</dbReference>
<dbReference type="ChiTaRS" id="Rpap3">
    <property type="organism name" value="mouse"/>
</dbReference>
<dbReference type="PRO" id="PR:Q9D706"/>
<dbReference type="Proteomes" id="UP000000589">
    <property type="component" value="Chromosome 15"/>
</dbReference>
<dbReference type="RNAct" id="Q9D706">
    <property type="molecule type" value="protein"/>
</dbReference>
<dbReference type="Bgee" id="ENSMUSG00000022466">
    <property type="expression patterns" value="Expressed in cleaving embryo and 248 other cell types or tissues"/>
</dbReference>
<dbReference type="GO" id="GO:0036064">
    <property type="term" value="C:ciliary basal body"/>
    <property type="evidence" value="ECO:0007669"/>
    <property type="project" value="Ensembl"/>
</dbReference>
<dbReference type="GO" id="GO:0005829">
    <property type="term" value="C:cytosol"/>
    <property type="evidence" value="ECO:0007669"/>
    <property type="project" value="Ensembl"/>
</dbReference>
<dbReference type="GO" id="GO:0097255">
    <property type="term" value="C:R2TP complex"/>
    <property type="evidence" value="ECO:0007669"/>
    <property type="project" value="Ensembl"/>
</dbReference>
<dbReference type="GO" id="GO:1990062">
    <property type="term" value="C:RPAP3/R2TP/prefoldin-like complex"/>
    <property type="evidence" value="ECO:0007669"/>
    <property type="project" value="Ensembl"/>
</dbReference>
<dbReference type="FunFam" id="1.25.40.10:FF:000057">
    <property type="entry name" value="RNA polymerase II associated protein 3"/>
    <property type="match status" value="2"/>
</dbReference>
<dbReference type="Gene3D" id="1.25.40.10">
    <property type="entry name" value="Tetratricopeptide repeat domain"/>
    <property type="match status" value="2"/>
</dbReference>
<dbReference type="InterPro" id="IPR051966">
    <property type="entry name" value="RPAP3"/>
</dbReference>
<dbReference type="InterPro" id="IPR025986">
    <property type="entry name" value="RPAP3-like_C"/>
</dbReference>
<dbReference type="InterPro" id="IPR011990">
    <property type="entry name" value="TPR-like_helical_dom_sf"/>
</dbReference>
<dbReference type="InterPro" id="IPR019734">
    <property type="entry name" value="TPR_rpt"/>
</dbReference>
<dbReference type="PANTHER" id="PTHR46423">
    <property type="entry name" value="RNA POLYMERASE II-ASSOCIATED PROTEIN 3"/>
    <property type="match status" value="1"/>
</dbReference>
<dbReference type="PANTHER" id="PTHR46423:SF1">
    <property type="entry name" value="RNA POLYMERASE II-ASSOCIATED PROTEIN 3"/>
    <property type="match status" value="1"/>
</dbReference>
<dbReference type="Pfam" id="PF13877">
    <property type="entry name" value="RPAP3_C"/>
    <property type="match status" value="1"/>
</dbReference>
<dbReference type="Pfam" id="PF00515">
    <property type="entry name" value="TPR_1"/>
    <property type="match status" value="2"/>
</dbReference>
<dbReference type="Pfam" id="PF13432">
    <property type="entry name" value="TPR_16"/>
    <property type="match status" value="1"/>
</dbReference>
<dbReference type="SMART" id="SM00028">
    <property type="entry name" value="TPR"/>
    <property type="match status" value="6"/>
</dbReference>
<dbReference type="SUPFAM" id="SSF48452">
    <property type="entry name" value="TPR-like"/>
    <property type="match status" value="2"/>
</dbReference>
<dbReference type="PROSITE" id="PS50005">
    <property type="entry name" value="TPR"/>
    <property type="match status" value="5"/>
</dbReference>
<dbReference type="PROSITE" id="PS50293">
    <property type="entry name" value="TPR_REGION"/>
    <property type="match status" value="1"/>
</dbReference>
<comment type="function">
    <text evidence="1">Forms an interface between the RNA polymerase II enzyme and chaperone/scaffolding protein, suggesting that it is required to connect RNA polymerase II to regulators of protein complex formation.</text>
</comment>
<comment type="subunit">
    <text evidence="1">Tightly associated with the RNA polymerase II complex (By similarity). Component of the R2TP complex composed at least of RUVBL1, RUVBL2, RPAP3 and PIHD1 (By similarity). Component of the PAQosome complex which is responsible for the biogenesis of several protein complexes and which consists of R2TP complex members RUVBL1, RUVBL2, RPAP3 and PIH1D1, URI complex members PFDN2, PFDN6, PDRG1, UXT and URI1 as well as ASDURF, POLR2E and DNAAF10/WDR92 (By similarity). Interacts with PIH1D1 (By similarity). Interacts with TSC1 and TSC2 (By similarity). Interacts with PRPF8 and EFTUD2 in a ZNHIT2-dependent manner (By similarity).</text>
</comment>
<comment type="similarity">
    <text evidence="3">Belongs to the RPAP3 family.</text>
</comment>
<protein>
    <recommendedName>
        <fullName>RNA polymerase II-associated protein 3</fullName>
    </recommendedName>
</protein>
<sequence>MTSASKAVELQLQVKHNAEELQDFMRDLEHWEKDMKEKDLELRRQGGVAEENLPPIRNGNFRKKKKKGKAKESSRKTKEENTKNRIKSYDYDAWAKLDVDRILDELDKEDSTHDSLSQESESDEDGIRVDSQKALVLKEKGNKYFKQGKYDEAIECYTKGMDADPYNPVLPTNRASAYFRLKKFAVAESDCNLAIALSRTYTKAYARRGAARFALQKLEDARKDYEKVLELEPDNFEATNELRKINQALTSKENSGPGAAAAAESKPAAGESKPTGGQQGRQKAIAEKDLGNGFFKEGKYEQAIECYTRGIAADRTNALLPANRAMAYLKIQRYEEAERDCTQAIVLDGSYSKAFARRGTARTFLGKINEAKQDFETVLLLEPGNKQAATELSRIKKELIEKGHWDDVFLDSTQRHHVVKAVDNPPRGSPKALKKVFIEETGNLIETVDAPDSSATVPESDRATAAVGTGTKKNPSEGVSLPAGDRPRAKVLKIEAVSDTSAPQAQVGVKQDARQPGSEKASVRAEQMPGQLAAAGLPPVPANSFQLESDFRQLRSSPEMLYQYVKNIEPSLYPKLFQKNLDPDVFNQIIKILHDFYIEREKPALIFEVLERLSQLRRFDMAVMFMSGPERKLTNVLFNHLEKSDLKEDSVEELKKRYGG</sequence>
<gene>
    <name type="primary">Rpap3</name>
    <name type="synonym">D15Ertd682e</name>
</gene>